<feature type="chain" id="PRO_0000263882" description="Translation initiation factor IF-1">
    <location>
        <begin position="1"/>
        <end position="72"/>
    </location>
</feature>
<feature type="domain" description="S1-like" evidence="1">
    <location>
        <begin position="1"/>
        <end position="72"/>
    </location>
</feature>
<evidence type="ECO:0000255" key="1">
    <source>
        <dbReference type="HAMAP-Rule" id="MF_00075"/>
    </source>
</evidence>
<evidence type="ECO:0000305" key="2"/>
<dbReference type="EMBL" id="CP000261">
    <property type="protein sequence ID" value="ABF35121.1"/>
    <property type="status" value="ALT_INIT"/>
    <property type="molecule type" value="Genomic_DNA"/>
</dbReference>
<dbReference type="SMR" id="Q1JE37"/>
<dbReference type="KEGG" id="spj:MGAS2096_Spy0069"/>
<dbReference type="HOGENOM" id="CLU_151267_1_0_9"/>
<dbReference type="GO" id="GO:0005829">
    <property type="term" value="C:cytosol"/>
    <property type="evidence" value="ECO:0007669"/>
    <property type="project" value="TreeGrafter"/>
</dbReference>
<dbReference type="GO" id="GO:0043022">
    <property type="term" value="F:ribosome binding"/>
    <property type="evidence" value="ECO:0007669"/>
    <property type="project" value="UniProtKB-UniRule"/>
</dbReference>
<dbReference type="GO" id="GO:0019843">
    <property type="term" value="F:rRNA binding"/>
    <property type="evidence" value="ECO:0007669"/>
    <property type="project" value="UniProtKB-UniRule"/>
</dbReference>
<dbReference type="GO" id="GO:0003743">
    <property type="term" value="F:translation initiation factor activity"/>
    <property type="evidence" value="ECO:0007669"/>
    <property type="project" value="UniProtKB-UniRule"/>
</dbReference>
<dbReference type="CDD" id="cd04451">
    <property type="entry name" value="S1_IF1"/>
    <property type="match status" value="1"/>
</dbReference>
<dbReference type="FunFam" id="2.40.50.140:FF:000002">
    <property type="entry name" value="Translation initiation factor IF-1"/>
    <property type="match status" value="1"/>
</dbReference>
<dbReference type="Gene3D" id="2.40.50.140">
    <property type="entry name" value="Nucleic acid-binding proteins"/>
    <property type="match status" value="1"/>
</dbReference>
<dbReference type="HAMAP" id="MF_00075">
    <property type="entry name" value="IF_1"/>
    <property type="match status" value="1"/>
</dbReference>
<dbReference type="InterPro" id="IPR012340">
    <property type="entry name" value="NA-bd_OB-fold"/>
</dbReference>
<dbReference type="InterPro" id="IPR006196">
    <property type="entry name" value="RNA-binding_domain_S1_IF1"/>
</dbReference>
<dbReference type="InterPro" id="IPR003029">
    <property type="entry name" value="S1_domain"/>
</dbReference>
<dbReference type="InterPro" id="IPR004368">
    <property type="entry name" value="TIF_IF1"/>
</dbReference>
<dbReference type="NCBIfam" id="TIGR00008">
    <property type="entry name" value="infA"/>
    <property type="match status" value="1"/>
</dbReference>
<dbReference type="PANTHER" id="PTHR33370">
    <property type="entry name" value="TRANSLATION INITIATION FACTOR IF-1, CHLOROPLASTIC"/>
    <property type="match status" value="1"/>
</dbReference>
<dbReference type="PANTHER" id="PTHR33370:SF1">
    <property type="entry name" value="TRANSLATION INITIATION FACTOR IF-1, CHLOROPLASTIC"/>
    <property type="match status" value="1"/>
</dbReference>
<dbReference type="Pfam" id="PF01176">
    <property type="entry name" value="eIF-1a"/>
    <property type="match status" value="1"/>
</dbReference>
<dbReference type="SMART" id="SM00316">
    <property type="entry name" value="S1"/>
    <property type="match status" value="1"/>
</dbReference>
<dbReference type="SUPFAM" id="SSF50249">
    <property type="entry name" value="Nucleic acid-binding proteins"/>
    <property type="match status" value="1"/>
</dbReference>
<dbReference type="PROSITE" id="PS50832">
    <property type="entry name" value="S1_IF1_TYPE"/>
    <property type="match status" value="1"/>
</dbReference>
<sequence>MAKEDVIEIEGKVVETMPNAMFTVELENGHQILATVSGKIRKNYIRILVGDRVTVEMSPYDLTRGRITYRFK</sequence>
<protein>
    <recommendedName>
        <fullName evidence="1">Translation initiation factor IF-1</fullName>
    </recommendedName>
</protein>
<name>IF1_STRPB</name>
<proteinExistence type="inferred from homology"/>
<accession>Q1JE37</accession>
<reference key="1">
    <citation type="journal article" date="2006" name="Proc. Natl. Acad. Sci. U.S.A.">
        <title>Molecular genetic anatomy of inter- and intraserotype variation in the human bacterial pathogen group A Streptococcus.</title>
        <authorList>
            <person name="Beres S.B."/>
            <person name="Richter E.W."/>
            <person name="Nagiec M.J."/>
            <person name="Sumby P."/>
            <person name="Porcella S.F."/>
            <person name="DeLeo F.R."/>
            <person name="Musser J.M."/>
        </authorList>
    </citation>
    <scope>NUCLEOTIDE SEQUENCE [LARGE SCALE GENOMIC DNA]</scope>
    <source>
        <strain>MGAS2096</strain>
    </source>
</reference>
<organism>
    <name type="scientific">Streptococcus pyogenes serotype M12 (strain MGAS2096)</name>
    <dbReference type="NCBI Taxonomy" id="370553"/>
    <lineage>
        <taxon>Bacteria</taxon>
        <taxon>Bacillati</taxon>
        <taxon>Bacillota</taxon>
        <taxon>Bacilli</taxon>
        <taxon>Lactobacillales</taxon>
        <taxon>Streptococcaceae</taxon>
        <taxon>Streptococcus</taxon>
    </lineage>
</organism>
<gene>
    <name evidence="1" type="primary">infA</name>
    <name type="ordered locus">MGAS2096_Spy0069</name>
</gene>
<keyword id="KW-0963">Cytoplasm</keyword>
<keyword id="KW-0396">Initiation factor</keyword>
<keyword id="KW-0648">Protein biosynthesis</keyword>
<keyword id="KW-0694">RNA-binding</keyword>
<keyword id="KW-0699">rRNA-binding</keyword>
<comment type="function">
    <text evidence="1">One of the essential components for the initiation of protein synthesis. Stabilizes the binding of IF-2 and IF-3 on the 30S subunit to which N-formylmethionyl-tRNA(fMet) subsequently binds. Helps modulate mRNA selection, yielding the 30S pre-initiation complex (PIC). Upon addition of the 50S ribosomal subunit IF-1, IF-2 and IF-3 are released leaving the mature 70S translation initiation complex.</text>
</comment>
<comment type="subunit">
    <text evidence="1">Component of the 30S ribosomal translation pre-initiation complex which assembles on the 30S ribosome in the order IF-2 and IF-3, IF-1 and N-formylmethionyl-tRNA(fMet); mRNA recruitment can occur at any time during PIC assembly.</text>
</comment>
<comment type="subcellular location">
    <subcellularLocation>
        <location evidence="1">Cytoplasm</location>
    </subcellularLocation>
</comment>
<comment type="similarity">
    <text evidence="1">Belongs to the IF-1 family.</text>
</comment>
<comment type="sequence caution" evidence="2">
    <conflict type="erroneous initiation">
        <sequence resource="EMBL-CDS" id="ABF35121"/>
    </conflict>
    <text>Extended N-terminus.</text>
</comment>